<dbReference type="EMBL" id="AM114193">
    <property type="protein sequence ID" value="CAJ35756.1"/>
    <property type="molecule type" value="Genomic_DNA"/>
</dbReference>
<dbReference type="RefSeq" id="WP_012036743.1">
    <property type="nucleotide sequence ID" value="NC_009464.1"/>
</dbReference>
<dbReference type="SMR" id="Q0W787"/>
<dbReference type="STRING" id="351160.RCIX292"/>
<dbReference type="GeneID" id="5143717"/>
<dbReference type="KEGG" id="rci:RCIX292"/>
<dbReference type="PATRIC" id="fig|351160.9.peg.2479"/>
<dbReference type="eggNOG" id="arCOG01336">
    <property type="taxonomic scope" value="Archaea"/>
</dbReference>
<dbReference type="OrthoDB" id="25187at2157"/>
<dbReference type="Proteomes" id="UP000000663">
    <property type="component" value="Chromosome"/>
</dbReference>
<dbReference type="Gene3D" id="3.30.700.20">
    <property type="entry name" value="Hypothetical protein ph0010, domain 1"/>
    <property type="match status" value="1"/>
</dbReference>
<dbReference type="Gene3D" id="3.30.1490.150">
    <property type="entry name" value="Hypothetical protein ph0010, domain 2"/>
    <property type="match status" value="1"/>
</dbReference>
<dbReference type="HAMAP" id="MF_00645">
    <property type="entry name" value="AMMECR1"/>
    <property type="match status" value="1"/>
</dbReference>
<dbReference type="InterPro" id="IPR023473">
    <property type="entry name" value="AMMECR1"/>
</dbReference>
<dbReference type="InterPro" id="IPR036071">
    <property type="entry name" value="AMMECR1_dom_sf"/>
</dbReference>
<dbReference type="InterPro" id="IPR002733">
    <property type="entry name" value="AMMECR1_domain"/>
</dbReference>
<dbReference type="InterPro" id="IPR027485">
    <property type="entry name" value="AMMECR1_N"/>
</dbReference>
<dbReference type="InterPro" id="IPR027623">
    <property type="entry name" value="AmmeMemoSam_A"/>
</dbReference>
<dbReference type="InterPro" id="IPR023472">
    <property type="entry name" value="Uncharacterised_MJ0810"/>
</dbReference>
<dbReference type="NCBIfam" id="TIGR04335">
    <property type="entry name" value="AmmeMemoSam_A"/>
    <property type="match status" value="1"/>
</dbReference>
<dbReference type="NCBIfam" id="TIGR00296">
    <property type="entry name" value="TIGR00296 family protein"/>
    <property type="match status" value="1"/>
</dbReference>
<dbReference type="PANTHER" id="PTHR13016:SF0">
    <property type="entry name" value="AMME SYNDROME CANDIDATE GENE 1 PROTEIN"/>
    <property type="match status" value="1"/>
</dbReference>
<dbReference type="PANTHER" id="PTHR13016">
    <property type="entry name" value="AMMECR1 HOMOLOG"/>
    <property type="match status" value="1"/>
</dbReference>
<dbReference type="Pfam" id="PF01871">
    <property type="entry name" value="AMMECR1"/>
    <property type="match status" value="1"/>
</dbReference>
<dbReference type="SUPFAM" id="SSF143447">
    <property type="entry name" value="AMMECR1-like"/>
    <property type="match status" value="1"/>
</dbReference>
<dbReference type="PROSITE" id="PS51112">
    <property type="entry name" value="AMMECR1"/>
    <property type="match status" value="1"/>
</dbReference>
<reference key="1">
    <citation type="journal article" date="2006" name="Science">
        <title>Genome of rice cluster I archaea -- the key methane producers in the rice rhizosphere.</title>
        <authorList>
            <person name="Erkel C."/>
            <person name="Kube M."/>
            <person name="Reinhardt R."/>
            <person name="Liesack W."/>
        </authorList>
    </citation>
    <scope>NUCLEOTIDE SEQUENCE [LARGE SCALE GENOMIC DNA]</scope>
    <source>
        <strain>DSM 22066 / NBRC 105507 / MRE50</strain>
    </source>
</reference>
<accession>Q0W787</accession>
<proteinExistence type="inferred from homology"/>
<evidence type="ECO:0000255" key="1">
    <source>
        <dbReference type="HAMAP-Rule" id="MF_00645"/>
    </source>
</evidence>
<name>Y2425_METAR</name>
<sequence length="198" mass="22197">MLSLEDGTLAVKTARNVIEEYVKTGNYSKFELPKTFDRPGGVFVTLSINHDLRGCIGYPYPMEDMSLGEALADAAMSAATRDPRFPRVHKNELDQIRVEVTILGQPELLKCKPLERPHHIKIGRDGLIIEYGLHKGLLLPQVPVEWHWDATEFLENLCLKAGISPDAWVEEKAKIYTFGGQIFEETEPGGPVIEKKIA</sequence>
<organism>
    <name type="scientific">Methanocella arvoryzae (strain DSM 22066 / NBRC 105507 / MRE50)</name>
    <dbReference type="NCBI Taxonomy" id="351160"/>
    <lineage>
        <taxon>Archaea</taxon>
        <taxon>Methanobacteriati</taxon>
        <taxon>Methanobacteriota</taxon>
        <taxon>Stenosarchaea group</taxon>
        <taxon>Methanomicrobia</taxon>
        <taxon>Methanocellales</taxon>
        <taxon>Methanocellaceae</taxon>
        <taxon>Methanocella</taxon>
    </lineage>
</organism>
<protein>
    <recommendedName>
        <fullName evidence="1">Protein UNCMA_24250</fullName>
    </recommendedName>
</protein>
<keyword id="KW-1185">Reference proteome</keyword>
<feature type="chain" id="PRO_1000082712" description="Protein UNCMA_24250">
    <location>
        <begin position="1"/>
        <end position="198"/>
    </location>
</feature>
<feature type="domain" description="AMMECR1" evidence="1">
    <location>
        <begin position="5"/>
        <end position="194"/>
    </location>
</feature>
<gene>
    <name type="ordered locus">UNCMA_24250</name>
    <name type="ORF">RCIX292</name>
</gene>